<name>UBA4_YEAST</name>
<reference key="1">
    <citation type="journal article" date="1994" name="Science">
        <title>Complete nucleotide sequence of Saccharomyces cerevisiae chromosome VIII.</title>
        <authorList>
            <person name="Johnston M."/>
            <person name="Andrews S."/>
            <person name="Brinkman R."/>
            <person name="Cooper J."/>
            <person name="Ding H."/>
            <person name="Dover J."/>
            <person name="Du Z."/>
            <person name="Favello A."/>
            <person name="Fulton L."/>
            <person name="Gattung S."/>
            <person name="Geisel C."/>
            <person name="Kirsten J."/>
            <person name="Kucaba T."/>
            <person name="Hillier L.W."/>
            <person name="Jier M."/>
            <person name="Johnston L."/>
            <person name="Langston Y."/>
            <person name="Latreille P."/>
            <person name="Louis E.J."/>
            <person name="Macri C."/>
            <person name="Mardis E."/>
            <person name="Menezes S."/>
            <person name="Mouser L."/>
            <person name="Nhan M."/>
            <person name="Rifkin L."/>
            <person name="Riles L."/>
            <person name="St Peter H."/>
            <person name="Trevaskis E."/>
            <person name="Vaughan K."/>
            <person name="Vignati D."/>
            <person name="Wilcox L."/>
            <person name="Wohldman P."/>
            <person name="Waterston R."/>
            <person name="Wilson R."/>
            <person name="Vaudin M."/>
        </authorList>
    </citation>
    <scope>NUCLEOTIDE SEQUENCE [LARGE SCALE GENOMIC DNA]</scope>
    <source>
        <strain>ATCC 204508 / S288c</strain>
    </source>
</reference>
<reference key="2">
    <citation type="journal article" date="2014" name="G3 (Bethesda)">
        <title>The reference genome sequence of Saccharomyces cerevisiae: Then and now.</title>
        <authorList>
            <person name="Engel S.R."/>
            <person name="Dietrich F.S."/>
            <person name="Fisk D.G."/>
            <person name="Binkley G."/>
            <person name="Balakrishnan R."/>
            <person name="Costanzo M.C."/>
            <person name="Dwight S.S."/>
            <person name="Hitz B.C."/>
            <person name="Karra K."/>
            <person name="Nash R.S."/>
            <person name="Weng S."/>
            <person name="Wong E.D."/>
            <person name="Lloyd P."/>
            <person name="Skrzypek M.S."/>
            <person name="Miyasato S.R."/>
            <person name="Simison M."/>
            <person name="Cherry J.M."/>
        </authorList>
    </citation>
    <scope>GENOME REANNOTATION</scope>
    <source>
        <strain>ATCC 204508 / S288c</strain>
    </source>
</reference>
<reference key="3">
    <citation type="journal article" date="2000" name="J. Biol. Chem.">
        <title>A protein conjugation system in yeast with homology to biosynthetic enzyme reaction of prokaryotes.</title>
        <authorList>
            <person name="Furukawa K."/>
            <person name="Mizushima N."/>
            <person name="Noda T."/>
            <person name="Ohsumi Y."/>
        </authorList>
    </citation>
    <scope>FUNCTION</scope>
    <scope>INTERACTION WITH URM1</scope>
    <scope>MUTAGENESIS OF CYS-225</scope>
</reference>
<reference key="4">
    <citation type="journal article" date="2003" name="Nature">
        <title>Global analysis of protein localization in budding yeast.</title>
        <authorList>
            <person name="Huh W.-K."/>
            <person name="Falvo J.V."/>
            <person name="Gerke L.C."/>
            <person name="Carroll A.S."/>
            <person name="Howson R.W."/>
            <person name="Weissman J.S."/>
            <person name="O'Shea E.K."/>
        </authorList>
    </citation>
    <scope>SUBCELLULAR LOCATION [LARGE SCALE ANALYSIS]</scope>
</reference>
<reference key="5">
    <citation type="journal article" date="2003" name="Nature">
        <title>Global analysis of protein expression in yeast.</title>
        <authorList>
            <person name="Ghaemmaghami S."/>
            <person name="Huh W.-K."/>
            <person name="Bower K."/>
            <person name="Howson R.W."/>
            <person name="Belle A."/>
            <person name="Dephoure N."/>
            <person name="O'Shea E.K."/>
            <person name="Weissman J.S."/>
        </authorList>
    </citation>
    <scope>LEVEL OF PROTEIN EXPRESSION [LARGE SCALE ANALYSIS]</scope>
</reference>
<reference key="6">
    <citation type="journal article" date="2008" name="Biochemistry">
        <title>The sulfurtransferase activity of Uba4 presents a link between ubiquitin-like protein conjugation and activation of sulfur carrier proteins.</title>
        <authorList>
            <person name="Schmitz J."/>
            <person name="Chowdhury M.M."/>
            <person name="Haenzelmann P."/>
            <person name="Nimtz M."/>
            <person name="Lee E.Y."/>
            <person name="Schindelin H."/>
            <person name="Leimkuehler S."/>
        </authorList>
    </citation>
    <scope>FUNCTION IN 2-THIOLATION OF TRNA</scope>
    <scope>MUTAGENESIS OF CYS-225 AND CYS-397</scope>
</reference>
<reference key="7">
    <citation type="journal article" date="2008" name="J. Biol. Chem.">
        <title>Thio-modification of yeast cytosolic tRNA requires a ubiquitin-related system that resembles bacterial sulfur transfer systems.</title>
        <authorList>
            <person name="Nakai Y."/>
            <person name="Nakai M."/>
            <person name="Hayashi H."/>
        </authorList>
    </citation>
    <scope>FUNCTION IN 2-THIOLATION OF TRNA</scope>
</reference>
<reference key="8">
    <citation type="journal article" date="2008" name="Mol. Cell. Proteomics">
        <title>A multidimensional chromatography technology for in-depth phosphoproteome analysis.</title>
        <authorList>
            <person name="Albuquerque C.P."/>
            <person name="Smolka M.B."/>
            <person name="Payne S.H."/>
            <person name="Bafna V."/>
            <person name="Eng J."/>
            <person name="Zhou H."/>
        </authorList>
    </citation>
    <scope>PHOSPHORYLATION [LARGE SCALE ANALYSIS] AT SER-326</scope>
    <scope>IDENTIFICATION BY MASS SPECTROMETRY [LARGE SCALE ANALYSIS]</scope>
</reference>
<reference key="9">
    <citation type="journal article" date="2008" name="RNA">
        <title>A genome-wide screen identifies genes required for formation of the wobble nucleoside 5-methoxycarbonylmethyl-2-thiouridine in Saccharomyces cerevisiae.</title>
        <authorList>
            <person name="Huang B."/>
            <person name="Lu J."/>
            <person name="Bystroem A.S."/>
        </authorList>
    </citation>
    <scope>FUNCTION IN 2-THIOLATION OF TRNA</scope>
</reference>
<reference key="10">
    <citation type="journal article" date="2009" name="Nature">
        <title>Ubiquitin-related modifier Urm1 acts as a sulphur carrier in thiolation of eukaryotic transfer RNA.</title>
        <authorList>
            <person name="Leidel S."/>
            <person name="Pedrioli P.G.A."/>
            <person name="Bucher T."/>
            <person name="Brost R."/>
            <person name="Costanzo M."/>
            <person name="Schmidt A."/>
            <person name="Aebersold R."/>
            <person name="Boone C."/>
            <person name="Hofmann K."/>
            <person name="Peter M."/>
        </authorList>
    </citation>
    <scope>FUNCTION IN 2-THIOLATION OF TRNA</scope>
    <scope>INTERACTION WITH NCS2; NCS6 AND URM1</scope>
    <scope>MUTAGENESIS OF CYS-225 AND CYS-397</scope>
</reference>
<reference key="11">
    <citation type="journal article" date="2009" name="Nucleic Acids Res.">
        <title>Mechanistic characterization of the sulfur-relay system for eukaryotic 2-thiouridine biogenesis at tRNA wobble positions.</title>
        <authorList>
            <person name="Noma A."/>
            <person name="Sakaguchi Y."/>
            <person name="Suzuki T."/>
        </authorList>
    </citation>
    <scope>FUNCTION IN 2-THIOLATION OF TRNA</scope>
    <scope>INTERACTION WITH URM1</scope>
    <scope>MUTAGENESIS OF CYS-225 AND CYS-397</scope>
</reference>
<reference key="12">
    <citation type="journal article" date="2012" name="Proc. Natl. Acad. Sci. U.S.A.">
        <title>N-terminal acetylome analyses and functional insights of the N-terminal acetyltransferase NatB.</title>
        <authorList>
            <person name="Van Damme P."/>
            <person name="Lasa M."/>
            <person name="Polevoda B."/>
            <person name="Gazquez C."/>
            <person name="Elosegui-Artola A."/>
            <person name="Kim D.S."/>
            <person name="De Juan-Pardo E."/>
            <person name="Demeyer K."/>
            <person name="Hole K."/>
            <person name="Larrea E."/>
            <person name="Timmerman E."/>
            <person name="Prieto J."/>
            <person name="Arnesen T."/>
            <person name="Sherman F."/>
            <person name="Gevaert K."/>
            <person name="Aldabe R."/>
        </authorList>
    </citation>
    <scope>ACETYLATION [LARGE SCALE ANALYSIS] AT MET-1</scope>
    <scope>IDENTIFICATION BY MASS SPECTROMETRY [LARGE SCALE ANALYSIS]</scope>
</reference>
<organism>
    <name type="scientific">Saccharomyces cerevisiae (strain ATCC 204508 / S288c)</name>
    <name type="common">Baker's yeast</name>
    <dbReference type="NCBI Taxonomy" id="559292"/>
    <lineage>
        <taxon>Eukaryota</taxon>
        <taxon>Fungi</taxon>
        <taxon>Dikarya</taxon>
        <taxon>Ascomycota</taxon>
        <taxon>Saccharomycotina</taxon>
        <taxon>Saccharomycetes</taxon>
        <taxon>Saccharomycetales</taxon>
        <taxon>Saccharomycetaceae</taxon>
        <taxon>Saccharomyces</taxon>
    </lineage>
</organism>
<dbReference type="EC" id="2.7.7.-" evidence="1"/>
<dbReference type="EC" id="2.8.1.-" evidence="1"/>
<dbReference type="EMBL" id="U00059">
    <property type="protein sequence ID" value="AAB68852.1"/>
    <property type="molecule type" value="Genomic_DNA"/>
</dbReference>
<dbReference type="EMBL" id="BK006934">
    <property type="protein sequence ID" value="DAA06805.1"/>
    <property type="molecule type" value="Genomic_DNA"/>
</dbReference>
<dbReference type="PIR" id="S48953">
    <property type="entry name" value="S48953"/>
</dbReference>
<dbReference type="RefSeq" id="NP_011979.1">
    <property type="nucleotide sequence ID" value="NM_001179241.1"/>
</dbReference>
<dbReference type="SMR" id="P38820"/>
<dbReference type="BioGRID" id="36544">
    <property type="interactions" value="357"/>
</dbReference>
<dbReference type="DIP" id="DIP-1883N"/>
<dbReference type="FunCoup" id="P38820">
    <property type="interactions" value="1034"/>
</dbReference>
<dbReference type="IntAct" id="P38820">
    <property type="interactions" value="26"/>
</dbReference>
<dbReference type="MINT" id="P38820"/>
<dbReference type="STRING" id="4932.YHR111W"/>
<dbReference type="GlyGen" id="P38820">
    <property type="glycosylation" value="1 site"/>
</dbReference>
<dbReference type="iPTMnet" id="P38820"/>
<dbReference type="PaxDb" id="4932-YHR111W"/>
<dbReference type="PeptideAtlas" id="P38820"/>
<dbReference type="EnsemblFungi" id="YHR111W_mRNA">
    <property type="protein sequence ID" value="YHR111W"/>
    <property type="gene ID" value="YHR111W"/>
</dbReference>
<dbReference type="GeneID" id="856511"/>
<dbReference type="KEGG" id="sce:YHR111W"/>
<dbReference type="AGR" id="SGD:S000001153"/>
<dbReference type="SGD" id="S000001153">
    <property type="gene designation" value="UBA4"/>
</dbReference>
<dbReference type="VEuPathDB" id="FungiDB:YHR111W"/>
<dbReference type="eggNOG" id="KOG2017">
    <property type="taxonomic scope" value="Eukaryota"/>
</dbReference>
<dbReference type="GeneTree" id="ENSGT00940000160847"/>
<dbReference type="HOGENOM" id="CLU_013325_1_2_1"/>
<dbReference type="InParanoid" id="P38820"/>
<dbReference type="OMA" id="IPDVGMD"/>
<dbReference type="OrthoDB" id="10261062at2759"/>
<dbReference type="BioCyc" id="YEAST:G3O-31153-MONOMER"/>
<dbReference type="BRENDA" id="2.7.7.B4">
    <property type="organism ID" value="984"/>
</dbReference>
<dbReference type="BRENDA" id="2.8.1.B2">
    <property type="organism ID" value="984"/>
</dbReference>
<dbReference type="Reactome" id="R-SCE-947581">
    <property type="pathway name" value="Molybdenum cofactor biosynthesis"/>
</dbReference>
<dbReference type="UniPathway" id="UPA00988"/>
<dbReference type="BioGRID-ORCS" id="856511">
    <property type="hits" value="2 hits in 10 CRISPR screens"/>
</dbReference>
<dbReference type="PRO" id="PR:P38820"/>
<dbReference type="Proteomes" id="UP000002311">
    <property type="component" value="Chromosome VIII"/>
</dbReference>
<dbReference type="RNAct" id="P38820">
    <property type="molecule type" value="protein"/>
</dbReference>
<dbReference type="GO" id="GO:0005737">
    <property type="term" value="C:cytoplasm"/>
    <property type="evidence" value="ECO:0007005"/>
    <property type="project" value="SGD"/>
</dbReference>
<dbReference type="GO" id="GO:0005829">
    <property type="term" value="C:cytosol"/>
    <property type="evidence" value="ECO:0007669"/>
    <property type="project" value="InterPro"/>
</dbReference>
<dbReference type="GO" id="GO:0070733">
    <property type="term" value="F:AMPylase activity"/>
    <property type="evidence" value="ECO:0000314"/>
    <property type="project" value="UniProtKB"/>
</dbReference>
<dbReference type="GO" id="GO:0005524">
    <property type="term" value="F:ATP binding"/>
    <property type="evidence" value="ECO:0007669"/>
    <property type="project" value="UniProtKB-KW"/>
</dbReference>
<dbReference type="GO" id="GO:0042802">
    <property type="term" value="F:identical protein binding"/>
    <property type="evidence" value="ECO:0000353"/>
    <property type="project" value="IntAct"/>
</dbReference>
<dbReference type="GO" id="GO:0046872">
    <property type="term" value="F:metal ion binding"/>
    <property type="evidence" value="ECO:0007669"/>
    <property type="project" value="UniProtKB-KW"/>
</dbReference>
<dbReference type="GO" id="GO:0016779">
    <property type="term" value="F:nucleotidyltransferase activity"/>
    <property type="evidence" value="ECO:0000315"/>
    <property type="project" value="UniProtKB"/>
</dbReference>
<dbReference type="GO" id="GO:0016783">
    <property type="term" value="F:sulfurtransferase activity"/>
    <property type="evidence" value="ECO:0000314"/>
    <property type="project" value="UniProtKB"/>
</dbReference>
<dbReference type="GO" id="GO:0004792">
    <property type="term" value="F:thiosulfate-cyanide sulfurtransferase activity"/>
    <property type="evidence" value="ECO:0000314"/>
    <property type="project" value="SGD"/>
</dbReference>
<dbReference type="GO" id="GO:0042292">
    <property type="term" value="F:URM1 activating enzyme activity"/>
    <property type="evidence" value="ECO:0000314"/>
    <property type="project" value="UniProtKB"/>
</dbReference>
<dbReference type="GO" id="GO:0007114">
    <property type="term" value="P:cell budding"/>
    <property type="evidence" value="ECO:0000316"/>
    <property type="project" value="SGD"/>
</dbReference>
<dbReference type="GO" id="GO:0034599">
    <property type="term" value="P:cellular response to oxidative stress"/>
    <property type="evidence" value="ECO:0000315"/>
    <property type="project" value="SGD"/>
</dbReference>
<dbReference type="GO" id="GO:0001403">
    <property type="term" value="P:invasive growth in response to glucose limitation"/>
    <property type="evidence" value="ECO:0000315"/>
    <property type="project" value="SGD"/>
</dbReference>
<dbReference type="GO" id="GO:0032447">
    <property type="term" value="P:protein urmylation"/>
    <property type="evidence" value="ECO:0000314"/>
    <property type="project" value="SGD"/>
</dbReference>
<dbReference type="GO" id="GO:2000220">
    <property type="term" value="P:regulation of pseudohyphal growth"/>
    <property type="evidence" value="ECO:0000315"/>
    <property type="project" value="SGD"/>
</dbReference>
<dbReference type="GO" id="GO:0034227">
    <property type="term" value="P:tRNA thio-modification"/>
    <property type="evidence" value="ECO:0000315"/>
    <property type="project" value="UniProtKB"/>
</dbReference>
<dbReference type="GO" id="GO:0002143">
    <property type="term" value="P:tRNA wobble position uridine thiolation"/>
    <property type="evidence" value="ECO:0000315"/>
    <property type="project" value="SGD"/>
</dbReference>
<dbReference type="GO" id="GO:0002098">
    <property type="term" value="P:tRNA wobble uridine modification"/>
    <property type="evidence" value="ECO:0000315"/>
    <property type="project" value="UniProtKB"/>
</dbReference>
<dbReference type="CDD" id="cd01526">
    <property type="entry name" value="RHOD_ThiF"/>
    <property type="match status" value="1"/>
</dbReference>
<dbReference type="CDD" id="cd00757">
    <property type="entry name" value="ThiF_MoeB_HesA_family"/>
    <property type="match status" value="1"/>
</dbReference>
<dbReference type="FunFam" id="3.40.250.10:FF:000014">
    <property type="entry name" value="Adenylyltransferase and sulfurtransferase MOCS3"/>
    <property type="match status" value="1"/>
</dbReference>
<dbReference type="FunFam" id="3.40.50.720:FF:000033">
    <property type="entry name" value="Adenylyltransferase and sulfurtransferase MOCS3"/>
    <property type="match status" value="1"/>
</dbReference>
<dbReference type="Gene3D" id="3.40.50.720">
    <property type="entry name" value="NAD(P)-binding Rossmann-like Domain"/>
    <property type="match status" value="1"/>
</dbReference>
<dbReference type="Gene3D" id="3.40.250.10">
    <property type="entry name" value="Rhodanese-like domain"/>
    <property type="match status" value="1"/>
</dbReference>
<dbReference type="HAMAP" id="MF_03049">
    <property type="entry name" value="MOCS3_Uba4"/>
    <property type="match status" value="1"/>
</dbReference>
<dbReference type="InterPro" id="IPR028885">
    <property type="entry name" value="MOCS3/Uba4"/>
</dbReference>
<dbReference type="InterPro" id="IPR001763">
    <property type="entry name" value="Rhodanese-like_dom"/>
</dbReference>
<dbReference type="InterPro" id="IPR036873">
    <property type="entry name" value="Rhodanese-like_dom_sf"/>
</dbReference>
<dbReference type="InterPro" id="IPR045886">
    <property type="entry name" value="ThiF/MoeB/HesA"/>
</dbReference>
<dbReference type="InterPro" id="IPR000594">
    <property type="entry name" value="ThiF_NAD_FAD-bd"/>
</dbReference>
<dbReference type="InterPro" id="IPR035985">
    <property type="entry name" value="Ubiquitin-activating_enz"/>
</dbReference>
<dbReference type="PANTHER" id="PTHR10953:SF102">
    <property type="entry name" value="ADENYLYLTRANSFERASE AND SULFURTRANSFERASE MOCS3"/>
    <property type="match status" value="1"/>
</dbReference>
<dbReference type="PANTHER" id="PTHR10953">
    <property type="entry name" value="UBIQUITIN-ACTIVATING ENZYME E1"/>
    <property type="match status" value="1"/>
</dbReference>
<dbReference type="Pfam" id="PF00581">
    <property type="entry name" value="Rhodanese"/>
    <property type="match status" value="1"/>
</dbReference>
<dbReference type="Pfam" id="PF00899">
    <property type="entry name" value="ThiF"/>
    <property type="match status" value="1"/>
</dbReference>
<dbReference type="SMART" id="SM00450">
    <property type="entry name" value="RHOD"/>
    <property type="match status" value="1"/>
</dbReference>
<dbReference type="SUPFAM" id="SSF69572">
    <property type="entry name" value="Activating enzymes of the ubiquitin-like proteins"/>
    <property type="match status" value="1"/>
</dbReference>
<dbReference type="PROSITE" id="PS50206">
    <property type="entry name" value="RHODANESE_3"/>
    <property type="match status" value="1"/>
</dbReference>
<gene>
    <name evidence="1" type="primary">UBA4</name>
    <name type="synonym">NCS3</name>
    <name type="ordered locus">YHR111W</name>
</gene>
<proteinExistence type="evidence at protein level"/>
<feature type="chain" id="PRO_0000120587" description="Adenylyltransferase and sulfurtransferase UBA4">
    <location>
        <begin position="1"/>
        <end position="440"/>
    </location>
</feature>
<feature type="domain" description="Rhodanese" evidence="1">
    <location>
        <begin position="339"/>
        <end position="438"/>
    </location>
</feature>
<feature type="active site" description="Glycyl thioester intermediate; for adenylyltransferase activity">
    <location>
        <position position="225"/>
    </location>
</feature>
<feature type="active site" description="Cysteine persulfide intermediate; for sulfurtransferase activity">
    <location>
        <position position="397"/>
    </location>
</feature>
<feature type="binding site" evidence="1">
    <location>
        <position position="77"/>
    </location>
    <ligand>
        <name>ATP</name>
        <dbReference type="ChEBI" id="CHEBI:30616"/>
    </ligand>
</feature>
<feature type="binding site" evidence="1">
    <location>
        <position position="98"/>
    </location>
    <ligand>
        <name>ATP</name>
        <dbReference type="ChEBI" id="CHEBI:30616"/>
    </ligand>
</feature>
<feature type="binding site" evidence="1">
    <location>
        <begin position="105"/>
        <end position="109"/>
    </location>
    <ligand>
        <name>ATP</name>
        <dbReference type="ChEBI" id="CHEBI:30616"/>
    </ligand>
</feature>
<feature type="binding site" evidence="1">
    <location>
        <position position="122"/>
    </location>
    <ligand>
        <name>ATP</name>
        <dbReference type="ChEBI" id="CHEBI:30616"/>
    </ligand>
</feature>
<feature type="binding site" evidence="1">
    <location>
        <begin position="166"/>
        <end position="167"/>
    </location>
    <ligand>
        <name>ATP</name>
        <dbReference type="ChEBI" id="CHEBI:30616"/>
    </ligand>
</feature>
<feature type="binding site" evidence="1">
    <location>
        <position position="208"/>
    </location>
    <ligand>
        <name>Zn(2+)</name>
        <dbReference type="ChEBI" id="CHEBI:29105"/>
    </ligand>
</feature>
<feature type="binding site" evidence="1">
    <location>
        <position position="211"/>
    </location>
    <ligand>
        <name>Zn(2+)</name>
        <dbReference type="ChEBI" id="CHEBI:29105"/>
    </ligand>
</feature>
<feature type="binding site" evidence="1">
    <location>
        <position position="286"/>
    </location>
    <ligand>
        <name>Zn(2+)</name>
        <dbReference type="ChEBI" id="CHEBI:29105"/>
    </ligand>
</feature>
<feature type="binding site" evidence="1">
    <location>
        <position position="289"/>
    </location>
    <ligand>
        <name>Zn(2+)</name>
        <dbReference type="ChEBI" id="CHEBI:29105"/>
    </ligand>
</feature>
<feature type="modified residue" description="N-acetylmethionine" evidence="11">
    <location>
        <position position="1"/>
    </location>
</feature>
<feature type="modified residue" description="Phosphoserine" evidence="10">
    <location>
        <position position="326"/>
    </location>
</feature>
<feature type="mutagenesis site" description="Abolishes adenylyltransferase activity but not sulfurtransferase activity." evidence="2 4 7 8">
    <original>C</original>
    <variation>A</variation>
    <variation>S</variation>
    <location>
        <position position="225"/>
    </location>
</feature>
<feature type="mutagenesis site" description="Abolishes sulfurtransferase activity but not adenylyltransferase activity." evidence="4 7 8">
    <original>C</original>
    <variation>A</variation>
    <variation>S</variation>
    <location>
        <position position="397"/>
    </location>
</feature>
<evidence type="ECO:0000255" key="1">
    <source>
        <dbReference type="HAMAP-Rule" id="MF_03049"/>
    </source>
</evidence>
<evidence type="ECO:0000269" key="2">
    <source>
    </source>
</evidence>
<evidence type="ECO:0000269" key="3">
    <source>
    </source>
</evidence>
<evidence type="ECO:0000269" key="4">
    <source>
    </source>
</evidence>
<evidence type="ECO:0000269" key="5">
    <source>
    </source>
</evidence>
<evidence type="ECO:0000269" key="6">
    <source>
    </source>
</evidence>
<evidence type="ECO:0000269" key="7">
    <source>
    </source>
</evidence>
<evidence type="ECO:0000269" key="8">
    <source>
    </source>
</evidence>
<evidence type="ECO:0000305" key="9">
    <source>
    </source>
</evidence>
<evidence type="ECO:0007744" key="10">
    <source>
    </source>
</evidence>
<evidence type="ECO:0007744" key="11">
    <source>
    </source>
</evidence>
<accession>P38820</accession>
<accession>D3DL61</accession>
<keyword id="KW-0007">Acetylation</keyword>
<keyword id="KW-0067">ATP-binding</keyword>
<keyword id="KW-0963">Cytoplasm</keyword>
<keyword id="KW-0479">Metal-binding</keyword>
<keyword id="KW-0511">Multifunctional enzyme</keyword>
<keyword id="KW-0547">Nucleotide-binding</keyword>
<keyword id="KW-0548">Nucleotidyltransferase</keyword>
<keyword id="KW-0597">Phosphoprotein</keyword>
<keyword id="KW-1185">Reference proteome</keyword>
<keyword id="KW-0808">Transferase</keyword>
<keyword id="KW-0819">tRNA processing</keyword>
<keyword id="KW-0833">Ubl conjugation pathway</keyword>
<keyword id="KW-0862">Zinc</keyword>
<comment type="function">
    <text evidence="2 4 5 6 7 8">Plays a central role in 2-thiolation of mcm(5)S(2)U at tRNA wobble positions of cytosolic tRNA(Lys), tRNA(Glu) and tRNA(Gln). Acts by mediating the C-terminal thiocarboxylation of sulfur carrier URM1. Its N-terminus first activates URM1 as acyl-adenylates (-COAMP), then the persulfide sulfur on the catalytic cysteine is transferred to URM1 to form thiocarboxylation (-COSH) of its C-terminus. The reaction probably involves hydrogen sulfide that is generated from the persulfide intermediate and that acts as a nucleophile towards URM1. Subsequently, a transient disulfide bond is formed. Does not use thiosulfate as sulfur donor; NFS1 probably acting as a sulfur donor for thiocarboxylation reactions. Prior mcm(5) tRNA modification by the elongator complex is required for 2-thiolation. May also be involved in protein urmylation.</text>
</comment>
<comment type="cofactor">
    <cofactor evidence="1">
        <name>Zn(2+)</name>
        <dbReference type="ChEBI" id="CHEBI:29105"/>
    </cofactor>
    <text evidence="1">Binds 1 zinc ion per subunit.</text>
</comment>
<comment type="pathway">
    <text evidence="1">tRNA modification; 5-methoxycarbonylmethyl-2-thiouridine-tRNA biosynthesis.</text>
</comment>
<comment type="interaction">
    <interactant intactId="EBI-24676">
        <id>P38820</id>
    </interactant>
    <interactant intactId="EBI-24676">
        <id>P38820</id>
        <label>UBA4</label>
    </interactant>
    <organismsDiffer>false</organismsDiffer>
    <experiments>3</experiments>
</comment>
<comment type="interaction">
    <interactant intactId="EBI-24676">
        <id>P38820</id>
    </interactant>
    <interactant intactId="EBI-24940">
        <id>P40554</id>
        <label>URM1</label>
    </interactant>
    <organismsDiffer>false</organismsDiffer>
    <experiments>8</experiments>
</comment>
<comment type="subcellular location">
    <subcellularLocation>
        <location evidence="9">Cytoplasm</location>
        <location evidence="9">Cytosol</location>
    </subcellularLocation>
</comment>
<comment type="miscellaneous">
    <text evidence="3">Present with 2620 molecules/cell in log phase SD medium.</text>
</comment>
<comment type="similarity">
    <text evidence="1">In the N-terminal section; belongs to the HesA/MoeB/ThiF family. UBA4 subfamily.</text>
</comment>
<sequence>MNDYHLEDTTSELEALRLENAQLREQLAKREDSSRDYPLSLEEYQRYGRQMIVEETGGVAGQVKLKNTKVLVVGAGGLGCPALPYLAGAGVGQIGIVDNDVVETSNLHRQVLHDSSRVGMLKCESARQYITKLNPHINVVTYPVRLNSSNAFDIFKGYNYILDCTDSPLTRYLVSDVAVNLGITVVSASGLGTEGQLTILNFNNIGPCYRCFYPTPPPPNAVTSCQEGGVIGPCIGLVGTMMAVETLKLILGIYTNENFSPFLMLYSGFPQQSLRTFKMRGRQEKCLCCGKNRTITKEAIEKGEINYELFCGARNYNVCEPDERISVDAFQRIYKDDEFLAKHIFLDVRPSHHYEISHFPEAVNIPIKNLRDMNGDLKKLQEKLPSVEKDSNIVILCRYGNDSQLATRLLKDKFGFSNVRDVRGGYFKYIDDIDQTIPKY</sequence>
<protein>
    <recommendedName>
        <fullName evidence="1">Adenylyltransferase and sulfurtransferase UBA4</fullName>
    </recommendedName>
    <alternativeName>
        <fullName>Needs CLA4 to survive protein 3</fullName>
    </alternativeName>
    <alternativeName>
        <fullName evidence="1">Ubiquitin-like protein activator 4</fullName>
    </alternativeName>
    <domain>
        <recommendedName>
            <fullName evidence="1">Adenylyltransferase UBA4</fullName>
            <ecNumber evidence="1">2.7.7.-</ecNumber>
        </recommendedName>
    </domain>
    <domain>
        <recommendedName>
            <fullName evidence="1">Sulfurtransferase UBA4</fullName>
            <ecNumber evidence="1">2.8.1.-</ecNumber>
        </recommendedName>
    </domain>
</protein>